<accession>Q83HJ9</accession>
<reference key="1">
    <citation type="journal article" date="2003" name="Lancet">
        <title>Sequencing and analysis of the genome of the Whipple's disease bacterium Tropheryma whipplei.</title>
        <authorList>
            <person name="Bentley S.D."/>
            <person name="Maiwald M."/>
            <person name="Murphy L.D."/>
            <person name="Pallen M.J."/>
            <person name="Yeats C.A."/>
            <person name="Dover L.G."/>
            <person name="Norbertczak H.T."/>
            <person name="Besra G.S."/>
            <person name="Quail M.A."/>
            <person name="Harris D.E."/>
            <person name="von Herbay A."/>
            <person name="Goble A."/>
            <person name="Rutter S."/>
            <person name="Squares R."/>
            <person name="Squares S."/>
            <person name="Barrell B.G."/>
            <person name="Parkhill J."/>
            <person name="Relman D.A."/>
        </authorList>
    </citation>
    <scope>NUCLEOTIDE SEQUENCE [LARGE SCALE GENOMIC DNA]</scope>
    <source>
        <strain>TW08/27</strain>
    </source>
</reference>
<name>MURE_TROW8</name>
<organism>
    <name type="scientific">Tropheryma whipplei (strain TW08/27)</name>
    <name type="common">Whipple's bacillus</name>
    <dbReference type="NCBI Taxonomy" id="218496"/>
    <lineage>
        <taxon>Bacteria</taxon>
        <taxon>Bacillati</taxon>
        <taxon>Actinomycetota</taxon>
        <taxon>Actinomycetes</taxon>
        <taxon>Micrococcales</taxon>
        <taxon>Tropherymataceae</taxon>
        <taxon>Tropheryma</taxon>
    </lineage>
</organism>
<keyword id="KW-0067">ATP-binding</keyword>
<keyword id="KW-0131">Cell cycle</keyword>
<keyword id="KW-0132">Cell division</keyword>
<keyword id="KW-0133">Cell shape</keyword>
<keyword id="KW-0961">Cell wall biogenesis/degradation</keyword>
<keyword id="KW-0963">Cytoplasm</keyword>
<keyword id="KW-0436">Ligase</keyword>
<keyword id="KW-0547">Nucleotide-binding</keyword>
<keyword id="KW-0573">Peptidoglycan synthesis</keyword>
<feature type="chain" id="PRO_0000101965" description="UDP-N-acetylmuramyl-tripeptide synthetase">
    <location>
        <begin position="1"/>
        <end position="509"/>
    </location>
</feature>
<feature type="binding site" evidence="1">
    <location>
        <begin position="124"/>
        <end position="130"/>
    </location>
    <ligand>
        <name>ATP</name>
        <dbReference type="ChEBI" id="CHEBI:30616"/>
    </ligand>
</feature>
<feature type="binding site" evidence="1">
    <location>
        <begin position="164"/>
        <end position="165"/>
    </location>
    <ligand>
        <name>UDP-N-acetyl-alpha-D-muramoyl-L-alanyl-D-glutamate</name>
        <dbReference type="ChEBI" id="CHEBI:83900"/>
    </ligand>
</feature>
<feature type="binding site" evidence="1">
    <location>
        <position position="191"/>
    </location>
    <ligand>
        <name>UDP-N-acetyl-alpha-D-muramoyl-L-alanyl-D-glutamate</name>
        <dbReference type="ChEBI" id="CHEBI:83900"/>
    </ligand>
</feature>
<feature type="binding site" evidence="1">
    <location>
        <position position="199"/>
    </location>
    <ligand>
        <name>UDP-N-acetyl-alpha-D-muramoyl-L-alanyl-D-glutamate</name>
        <dbReference type="ChEBI" id="CHEBI:83900"/>
    </ligand>
</feature>
<feature type="modified residue" description="N6-carboxylysine" evidence="1">
    <location>
        <position position="231"/>
    </location>
</feature>
<dbReference type="EC" id="6.3.2.-" evidence="1"/>
<dbReference type="EMBL" id="BX251411">
    <property type="protein sequence ID" value="CAD67211.1"/>
    <property type="molecule type" value="Genomic_DNA"/>
</dbReference>
<dbReference type="RefSeq" id="WP_011096491.1">
    <property type="nucleotide sequence ID" value="NC_004551.1"/>
</dbReference>
<dbReference type="SMR" id="Q83HJ9"/>
<dbReference type="GeneID" id="67388324"/>
<dbReference type="KEGG" id="tws:TW545"/>
<dbReference type="HOGENOM" id="CLU_022291_4_1_11"/>
<dbReference type="UniPathway" id="UPA00219"/>
<dbReference type="GO" id="GO:0005737">
    <property type="term" value="C:cytoplasm"/>
    <property type="evidence" value="ECO:0007669"/>
    <property type="project" value="UniProtKB-SubCell"/>
</dbReference>
<dbReference type="GO" id="GO:0016881">
    <property type="term" value="F:acid-amino acid ligase activity"/>
    <property type="evidence" value="ECO:0007669"/>
    <property type="project" value="UniProtKB-UniRule"/>
</dbReference>
<dbReference type="GO" id="GO:0005524">
    <property type="term" value="F:ATP binding"/>
    <property type="evidence" value="ECO:0007669"/>
    <property type="project" value="UniProtKB-UniRule"/>
</dbReference>
<dbReference type="GO" id="GO:0000287">
    <property type="term" value="F:magnesium ion binding"/>
    <property type="evidence" value="ECO:0007669"/>
    <property type="project" value="UniProtKB-UniRule"/>
</dbReference>
<dbReference type="GO" id="GO:0051301">
    <property type="term" value="P:cell division"/>
    <property type="evidence" value="ECO:0007669"/>
    <property type="project" value="UniProtKB-KW"/>
</dbReference>
<dbReference type="GO" id="GO:0071555">
    <property type="term" value="P:cell wall organization"/>
    <property type="evidence" value="ECO:0007669"/>
    <property type="project" value="UniProtKB-KW"/>
</dbReference>
<dbReference type="GO" id="GO:0009252">
    <property type="term" value="P:peptidoglycan biosynthetic process"/>
    <property type="evidence" value="ECO:0007669"/>
    <property type="project" value="UniProtKB-UniRule"/>
</dbReference>
<dbReference type="GO" id="GO:0008360">
    <property type="term" value="P:regulation of cell shape"/>
    <property type="evidence" value="ECO:0007669"/>
    <property type="project" value="UniProtKB-KW"/>
</dbReference>
<dbReference type="Gene3D" id="3.90.190.20">
    <property type="entry name" value="Mur ligase, C-terminal domain"/>
    <property type="match status" value="1"/>
</dbReference>
<dbReference type="Gene3D" id="3.40.1190.10">
    <property type="entry name" value="Mur-like, catalytic domain"/>
    <property type="match status" value="1"/>
</dbReference>
<dbReference type="Gene3D" id="3.40.1390.10">
    <property type="entry name" value="MurE/MurF, N-terminal domain"/>
    <property type="match status" value="1"/>
</dbReference>
<dbReference type="HAMAP" id="MF_00208">
    <property type="entry name" value="MurE"/>
    <property type="match status" value="1"/>
</dbReference>
<dbReference type="InterPro" id="IPR036565">
    <property type="entry name" value="Mur-like_cat_sf"/>
</dbReference>
<dbReference type="InterPro" id="IPR004101">
    <property type="entry name" value="Mur_ligase_C"/>
</dbReference>
<dbReference type="InterPro" id="IPR036615">
    <property type="entry name" value="Mur_ligase_C_dom_sf"/>
</dbReference>
<dbReference type="InterPro" id="IPR013221">
    <property type="entry name" value="Mur_ligase_cen"/>
</dbReference>
<dbReference type="InterPro" id="IPR035911">
    <property type="entry name" value="MurE/MurF_N"/>
</dbReference>
<dbReference type="InterPro" id="IPR005761">
    <property type="entry name" value="UDP-N-AcMur-Glu-dNH2Pim_ligase"/>
</dbReference>
<dbReference type="NCBIfam" id="TIGR01085">
    <property type="entry name" value="murE"/>
    <property type="match status" value="1"/>
</dbReference>
<dbReference type="PANTHER" id="PTHR23135">
    <property type="entry name" value="MUR LIGASE FAMILY MEMBER"/>
    <property type="match status" value="1"/>
</dbReference>
<dbReference type="PANTHER" id="PTHR23135:SF4">
    <property type="entry name" value="UDP-N-ACETYLMURAMOYL-L-ALANYL-D-GLUTAMATE--2,6-DIAMINOPIMELATE LIGASE MURE HOMOLOG, CHLOROPLASTIC"/>
    <property type="match status" value="1"/>
</dbReference>
<dbReference type="Pfam" id="PF02875">
    <property type="entry name" value="Mur_ligase_C"/>
    <property type="match status" value="1"/>
</dbReference>
<dbReference type="Pfam" id="PF08245">
    <property type="entry name" value="Mur_ligase_M"/>
    <property type="match status" value="1"/>
</dbReference>
<dbReference type="SUPFAM" id="SSF53623">
    <property type="entry name" value="MurD-like peptide ligases, catalytic domain"/>
    <property type="match status" value="1"/>
</dbReference>
<dbReference type="SUPFAM" id="SSF53244">
    <property type="entry name" value="MurD-like peptide ligases, peptide-binding domain"/>
    <property type="match status" value="1"/>
</dbReference>
<dbReference type="SUPFAM" id="SSF63418">
    <property type="entry name" value="MurE/MurF N-terminal domain"/>
    <property type="match status" value="1"/>
</dbReference>
<proteinExistence type="inferred from homology"/>
<protein>
    <recommendedName>
        <fullName evidence="1">UDP-N-acetylmuramyl-tripeptide synthetase</fullName>
        <ecNumber evidence="1">6.3.2.-</ecNumber>
    </recommendedName>
    <alternativeName>
        <fullName evidence="1">UDP-MurNAc-tripeptide synthetase</fullName>
    </alternativeName>
</protein>
<gene>
    <name evidence="1" type="primary">murE</name>
    <name type="ordered locus">TW545</name>
</gene>
<evidence type="ECO:0000255" key="1">
    <source>
        <dbReference type="HAMAP-Rule" id="MF_00208"/>
    </source>
</evidence>
<comment type="function">
    <text evidence="1">Catalyzes the addition of an amino acid to the nucleotide precursor UDP-N-acetylmuramoyl-L-alanyl-D-glutamate (UMAG) in the biosynthesis of bacterial cell-wall peptidoglycan.</text>
</comment>
<comment type="pathway">
    <text evidence="1">Cell wall biogenesis; peptidoglycan biosynthesis.</text>
</comment>
<comment type="subcellular location">
    <subcellularLocation>
        <location evidence="1">Cytoplasm</location>
    </subcellularLocation>
</comment>
<comment type="PTM">
    <text evidence="1">Carboxylation is probably crucial for Mg(2+) binding and, consequently, for the gamma-phosphate positioning of ATP.</text>
</comment>
<comment type="similarity">
    <text evidence="1">Belongs to the MurCDEF family. MurE subfamily.</text>
</comment>
<sequence>MTLQGKPYRLSDLIKQTGVRLTDCSNQFSDRFVSGITQIAQSVERDDIFVAFQGKTRHGVEFLDQVQSCAAVLTDNKGRHIMQSDCLPTRSTPILVTDSPRSDLIVLAKRVYPIDDIRIFGITGTNGKTSTMHIAAKLLEMMGISCGISTTIGSSASESDSCLTTPELCQLYARIFTAKQARADFFALEASSHAINRGRLGDIVLEVAAFTNLTPEHMEEHKNMEAYYQAKKALFLNKRSNSAVINIDTPYGIRLFKETGCSASVISENTKYGLDHKLFWQASVRRVGLSFGFTLISPSGYRVESSISLLGKAFALNTCMAIVILCNLGIDIERIDSVLRKAGGLKMVLPGRMEVFQTGNSPRVIVDHGHTVDAVETALVAAKSITRGRLITIINADGQRDPSKRKHLGQLCGAYSDKLFITDGHSRFENPAEIRRMILDGVEGPRKQVEQIPSMTQAVLAAIDIAKSDDTVLCSGFGDDPYLDVLGKKIPYSLRDEVRRGLERFAQGT</sequence>